<comment type="function">
    <text evidence="1 6">Snake venom phospholipase A2 (PLA2) that acts as a presynaptic neurotoxin, an inhibitor of blood coagulation, and has been found to bind with high affinity to intracellular proteins. The response of indirectly stimulated neuromuscular preparations to ammodytoxin (Atx) is triphasic. The first phase, the transient inhibition of the acetylcholine (ACh) release, starts soon after the addition of Atx and lasts for several minutes. This phase is probably independent of Atx enzymatic activity. The effect may be due to the specific binding of the toxin to presynaptic receptors. These receptors, called N-type receptors, are still unidentified. It is noteworthy that a neuronal isoform of the M-type PLA2 receptor (R180) has been identified as a high-affinity receptor for Atx in neuronal plasma membranes. It was demonstrated however that this receptor is not essential for expression of neurotoxicity by Atx. The second phase corresponds to an augmentation of neurotransmitter release. A peak is reached 10-20 minutes after exposure of the preparation to Atx and is followed by a gradual reduction. In this phase, the enzymatic activity of Atx of the mammalian is not significant. It is speculated that the increased release of neurotransmitter in this phase is induced by the interference of Atx with voltage-gated potassium channels. Measurements of ionic currents showed however that voltage-gated potassium channels are not affected by Atx. The third phase of the response of neuromuscular preparations to Atx, which corresponds to a complete and irreversible paralysis, is clearly dependent on the hydrolytic activity of the toxin. In addition to its presynaptic neurotoxicity, Atx shows an anticoagulant activity by binding with high affinity to activated coagulation factor X (F10) thus inhibiting the formation of the prothrombinase complex (FX/FV) and its activity (IC(50) is 82 nM). Surprisingly, Atx was discovered to bind intracellular proteins such as calmodulin (CaM), 14-3-3 proteins gamma (YWHAG) and epsilon (YWHAE) (by similarity with AtxC), as well as R25 (by similarity with AtxC), a mitochondrial integral membrane protein found in cerebral cortex. These findings raised a doubt about the dogma of the exclusively extracellular action of PLA2s, defended by the potential instability of these molecules in the reducing environment of the eukaryotic cytosol coupled with their possible inability to act as enzymes in this cellular compartment, due to too low concentration of calcium ions. This hypothesis was challenged efficiently by demonstrating the internalization of AtxA into a culture cells, but still remains to be directly demonstrated in vivo (By similarity). PLA2 catalyzes the calcium-dependent hydrolysis of the 2-acyl groups in 3-sn-phosphoglycerides.</text>
</comment>
<comment type="catalytic activity">
    <reaction evidence="4 5 7">
        <text>a 1,2-diacyl-sn-glycero-3-phosphocholine + H2O = a 1-acyl-sn-glycero-3-phosphocholine + a fatty acid + H(+)</text>
        <dbReference type="Rhea" id="RHEA:15801"/>
        <dbReference type="ChEBI" id="CHEBI:15377"/>
        <dbReference type="ChEBI" id="CHEBI:15378"/>
        <dbReference type="ChEBI" id="CHEBI:28868"/>
        <dbReference type="ChEBI" id="CHEBI:57643"/>
        <dbReference type="ChEBI" id="CHEBI:58168"/>
        <dbReference type="EC" id="3.1.1.4"/>
    </reaction>
</comment>
<comment type="cofactor">
    <cofactor evidence="7">
        <name>Ca(2+)</name>
        <dbReference type="ChEBI" id="CHEBI:29108"/>
    </cofactor>
    <text evidence="7">Binds 1 Ca(2+) ion.</text>
</comment>
<comment type="subunit">
    <text evidence="1">Monomer. Binds to calmodulin, coagulation factor X (F10), M-type PLA2 receptor (R-180), 14-3-3 proteins gamma (YWHAG) and epsilon (YWHAE), and R25, a mitochondrial membrane protein (By similarity).</text>
</comment>
<comment type="subcellular location">
    <subcellularLocation>
        <location>Secreted</location>
    </subcellularLocation>
    <subcellularLocation>
        <location evidence="1">Host cytoplasm</location>
        <location evidence="1">Host cytosol</location>
    </subcellularLocation>
</comment>
<comment type="tissue specificity">
    <text>Expressed by the venom gland.</text>
</comment>
<comment type="toxic dose">
    <text evidence="8">LD(50) is 0.58 mg/kg by intravenous injection into mice.</text>
</comment>
<comment type="similarity">
    <text evidence="10">Belongs to the phospholipase A2 family. Group II subfamily. D49 sub-subfamily.</text>
</comment>
<protein>
    <recommendedName>
        <fullName>Basic phospholipase A2 ammodytoxin B</fullName>
        <shortName>AtxB</shortName>
        <shortName>svPLA2</shortName>
        <ecNumber>3.1.1.4</ecNumber>
    </recommendedName>
    <alternativeName>
        <fullName>Phosphatidylcholine 2-acylhydrolase</fullName>
    </alternativeName>
</protein>
<organism>
    <name type="scientific">Vipera ammodytes ammodytes</name>
    <name type="common">Western sand viper</name>
    <dbReference type="NCBI Taxonomy" id="8705"/>
    <lineage>
        <taxon>Eukaryota</taxon>
        <taxon>Metazoa</taxon>
        <taxon>Chordata</taxon>
        <taxon>Craniata</taxon>
        <taxon>Vertebrata</taxon>
        <taxon>Euteleostomi</taxon>
        <taxon>Lepidosauria</taxon>
        <taxon>Squamata</taxon>
        <taxon>Bifurcata</taxon>
        <taxon>Unidentata</taxon>
        <taxon>Episquamata</taxon>
        <taxon>Toxicofera</taxon>
        <taxon>Serpentes</taxon>
        <taxon>Colubroidea</taxon>
        <taxon>Viperidae</taxon>
        <taxon>Viperinae</taxon>
        <taxon>Vipera</taxon>
    </lineage>
</organism>
<evidence type="ECO:0000250" key="1"/>
<evidence type="ECO:0000250" key="2">
    <source>
        <dbReference type="UniProtKB" id="P14418"/>
    </source>
</evidence>
<evidence type="ECO:0000250" key="3">
    <source>
        <dbReference type="UniProtKB" id="P59071"/>
    </source>
</evidence>
<evidence type="ECO:0000255" key="4">
    <source>
        <dbReference type="PROSITE-ProRule" id="PRU10035"/>
    </source>
</evidence>
<evidence type="ECO:0000255" key="5">
    <source>
        <dbReference type="PROSITE-ProRule" id="PRU10036"/>
    </source>
</evidence>
<evidence type="ECO:0000269" key="6">
    <source>
    </source>
</evidence>
<evidence type="ECO:0000269" key="7">
    <source>
    </source>
</evidence>
<evidence type="ECO:0000269" key="8">
    <source>
    </source>
</evidence>
<evidence type="ECO:0000269" key="9">
    <source>
    </source>
</evidence>
<evidence type="ECO:0000305" key="10"/>
<proteinExistence type="evidence at protein level"/>
<dbReference type="EC" id="3.1.1.4"/>
<dbReference type="EMBL" id="X52241">
    <property type="protein sequence ID" value="CAA36486.1"/>
    <property type="molecule type" value="mRNA"/>
</dbReference>
<dbReference type="EMBL" id="X52241">
    <property type="protein sequence ID" value="CAA36487.1"/>
    <property type="molecule type" value="mRNA"/>
</dbReference>
<dbReference type="PIR" id="A25806">
    <property type="entry name" value="A25806"/>
</dbReference>
<dbReference type="PIR" id="S10333">
    <property type="entry name" value="S10333"/>
</dbReference>
<dbReference type="SMR" id="P14424"/>
<dbReference type="GO" id="GO:0005576">
    <property type="term" value="C:extracellular region"/>
    <property type="evidence" value="ECO:0007669"/>
    <property type="project" value="UniProtKB-SubCell"/>
</dbReference>
<dbReference type="GO" id="GO:0005509">
    <property type="term" value="F:calcium ion binding"/>
    <property type="evidence" value="ECO:0007669"/>
    <property type="project" value="InterPro"/>
</dbReference>
<dbReference type="GO" id="GO:0047498">
    <property type="term" value="F:calcium-dependent phospholipase A2 activity"/>
    <property type="evidence" value="ECO:0007669"/>
    <property type="project" value="TreeGrafter"/>
</dbReference>
<dbReference type="GO" id="GO:0005543">
    <property type="term" value="F:phospholipid binding"/>
    <property type="evidence" value="ECO:0007669"/>
    <property type="project" value="TreeGrafter"/>
</dbReference>
<dbReference type="GO" id="GO:0090729">
    <property type="term" value="F:toxin activity"/>
    <property type="evidence" value="ECO:0007669"/>
    <property type="project" value="UniProtKB-KW"/>
</dbReference>
<dbReference type="GO" id="GO:0050482">
    <property type="term" value="P:arachidonate secretion"/>
    <property type="evidence" value="ECO:0007669"/>
    <property type="project" value="InterPro"/>
</dbReference>
<dbReference type="GO" id="GO:0016042">
    <property type="term" value="P:lipid catabolic process"/>
    <property type="evidence" value="ECO:0007669"/>
    <property type="project" value="UniProtKB-KW"/>
</dbReference>
<dbReference type="GO" id="GO:0042130">
    <property type="term" value="P:negative regulation of T cell proliferation"/>
    <property type="evidence" value="ECO:0007669"/>
    <property type="project" value="TreeGrafter"/>
</dbReference>
<dbReference type="GO" id="GO:0006644">
    <property type="term" value="P:phospholipid metabolic process"/>
    <property type="evidence" value="ECO:0007669"/>
    <property type="project" value="InterPro"/>
</dbReference>
<dbReference type="CDD" id="cd00125">
    <property type="entry name" value="PLA2c"/>
    <property type="match status" value="1"/>
</dbReference>
<dbReference type="FunFam" id="1.20.90.10:FF:000001">
    <property type="entry name" value="Basic phospholipase A2 homolog"/>
    <property type="match status" value="1"/>
</dbReference>
<dbReference type="Gene3D" id="1.20.90.10">
    <property type="entry name" value="Phospholipase A2 domain"/>
    <property type="match status" value="1"/>
</dbReference>
<dbReference type="InterPro" id="IPR001211">
    <property type="entry name" value="PLipase_A2"/>
</dbReference>
<dbReference type="InterPro" id="IPR033112">
    <property type="entry name" value="PLipase_A2_Asp_AS"/>
</dbReference>
<dbReference type="InterPro" id="IPR016090">
    <property type="entry name" value="PLipase_A2_dom"/>
</dbReference>
<dbReference type="InterPro" id="IPR036444">
    <property type="entry name" value="PLipase_A2_dom_sf"/>
</dbReference>
<dbReference type="InterPro" id="IPR033113">
    <property type="entry name" value="PLipase_A2_His_AS"/>
</dbReference>
<dbReference type="PANTHER" id="PTHR11716">
    <property type="entry name" value="PHOSPHOLIPASE A2 FAMILY MEMBER"/>
    <property type="match status" value="1"/>
</dbReference>
<dbReference type="PANTHER" id="PTHR11716:SF9">
    <property type="entry name" value="PHOSPHOLIPASE A2, MEMBRANE ASSOCIATED"/>
    <property type="match status" value="1"/>
</dbReference>
<dbReference type="Pfam" id="PF00068">
    <property type="entry name" value="Phospholip_A2_1"/>
    <property type="match status" value="1"/>
</dbReference>
<dbReference type="PRINTS" id="PR00389">
    <property type="entry name" value="PHPHLIPASEA2"/>
</dbReference>
<dbReference type="SMART" id="SM00085">
    <property type="entry name" value="PA2c"/>
    <property type="match status" value="1"/>
</dbReference>
<dbReference type="SUPFAM" id="SSF48619">
    <property type="entry name" value="Phospholipase A2, PLA2"/>
    <property type="match status" value="1"/>
</dbReference>
<dbReference type="PROSITE" id="PS00119">
    <property type="entry name" value="PA2_ASP"/>
    <property type="match status" value="1"/>
</dbReference>
<dbReference type="PROSITE" id="PS00118">
    <property type="entry name" value="PA2_HIS"/>
    <property type="match status" value="1"/>
</dbReference>
<sequence length="138" mass="15529">MRTLWIVAVCLIGVEGSLLEFGMMILGETGKNPLTSYSFYGCYCGVGGKGTPKDATDRCCFVHDCCYGNLPDCSPKTDRYKYHRENGAIVCGKGTSCENRICECDRAAAICFRKNLKTYNHIYMYYPDFLCKKESEKC</sequence>
<feature type="signal peptide" evidence="9">
    <location>
        <begin position="1"/>
        <end position="16"/>
    </location>
</feature>
<feature type="chain" id="PRO_0000022971" description="Basic phospholipase A2 ammodytoxin B" evidence="9">
    <location>
        <begin position="17"/>
        <end position="138"/>
    </location>
</feature>
<feature type="active site" evidence="2">
    <location>
        <position position="63"/>
    </location>
</feature>
<feature type="active site" evidence="2">
    <location>
        <position position="105"/>
    </location>
</feature>
<feature type="binding site" evidence="3">
    <location>
        <position position="43"/>
    </location>
    <ligand>
        <name>Ca(2+)</name>
        <dbReference type="ChEBI" id="CHEBI:29108"/>
    </ligand>
</feature>
<feature type="binding site" evidence="3">
    <location>
        <position position="45"/>
    </location>
    <ligand>
        <name>Ca(2+)</name>
        <dbReference type="ChEBI" id="CHEBI:29108"/>
    </ligand>
</feature>
<feature type="binding site" evidence="3">
    <location>
        <position position="47"/>
    </location>
    <ligand>
        <name>Ca(2+)</name>
        <dbReference type="ChEBI" id="CHEBI:29108"/>
    </ligand>
</feature>
<feature type="binding site" evidence="3">
    <location>
        <position position="64"/>
    </location>
    <ligand>
        <name>Ca(2+)</name>
        <dbReference type="ChEBI" id="CHEBI:29108"/>
    </ligand>
</feature>
<feature type="site" description="Putative membrane binding site">
    <location>
        <position position="18"/>
    </location>
</feature>
<feature type="site" description="Putative membrane binding site">
    <location>
        <position position="19"/>
    </location>
</feature>
<feature type="site" description="Putative membrane binding site">
    <location>
        <position position="34"/>
    </location>
</feature>
<feature type="site" description="Putative membrane binding site">
    <location>
        <position position="35"/>
    </location>
</feature>
<feature type="site" description="Putative membrane binding site">
    <location>
        <position position="39"/>
    </location>
</feature>
<feature type="site" description="Putative membrane binding site">
    <location>
        <position position="46"/>
    </location>
</feature>
<feature type="site" description="Putative membrane binding site">
    <location>
        <position position="76"/>
    </location>
</feature>
<feature type="site" description="Putative membrane binding site">
    <location>
        <position position="77"/>
    </location>
</feature>
<feature type="site" description="Putative membrane binding site">
    <location>
        <position position="79"/>
    </location>
</feature>
<feature type="site" description="Putative membrane binding site">
    <location>
        <position position="82"/>
    </location>
</feature>
<feature type="site" description="Putative membrane binding site">
    <location>
        <position position="124"/>
    </location>
</feature>
<feature type="site" description="Putative membrane binding site">
    <location>
        <position position="125"/>
    </location>
</feature>
<feature type="site" description="Putative membrane binding site">
    <location>
        <position position="129"/>
    </location>
</feature>
<feature type="disulfide bond" evidence="3">
    <location>
        <begin position="42"/>
        <end position="131"/>
    </location>
</feature>
<feature type="disulfide bond" evidence="3">
    <location>
        <begin position="44"/>
        <end position="60"/>
    </location>
</feature>
<feature type="disulfide bond" evidence="3">
    <location>
        <begin position="59"/>
        <end position="111"/>
    </location>
</feature>
<feature type="disulfide bond" evidence="3">
    <location>
        <begin position="65"/>
        <end position="138"/>
    </location>
</feature>
<feature type="disulfide bond" evidence="3">
    <location>
        <begin position="66"/>
        <end position="104"/>
    </location>
</feature>
<feature type="disulfide bond" evidence="3">
    <location>
        <begin position="73"/>
        <end position="97"/>
    </location>
</feature>
<feature type="disulfide bond" evidence="3">
    <location>
        <begin position="91"/>
        <end position="102"/>
    </location>
</feature>
<accession>P14424</accession>
<accession>Q91521</accession>
<name>PA2BB_VIPAA</name>
<reference key="1">
    <citation type="journal article" date="1990" name="Nucleic Acids Res.">
        <title>Sequence of the cDNA coding for ammodytoxin B.</title>
        <authorList>
            <person name="Kordis D."/>
            <person name="Pungercar J."/>
            <person name="Strukelj B."/>
            <person name="Liang N.-S."/>
            <person name="Gubensek F."/>
        </authorList>
    </citation>
    <scope>NUCLEOTIDE SEQUENCE [MRNA]</scope>
    <source>
        <strain>Northern Balkan</strain>
        <tissue>Venom gland</tissue>
    </source>
</reference>
<reference key="2">
    <citation type="journal article" date="1986" name="Biol. Chem. Hoppe-Seyler">
        <title>Amino-acid sequence of ammodytoxin B partially reveals the location of the site of toxicity of ammodytoxins.</title>
        <authorList>
            <person name="Ritonja A."/>
            <person name="Machleidt W."/>
            <person name="Turk V."/>
            <person name="Gubensek F."/>
        </authorList>
    </citation>
    <scope>PROTEIN SEQUENCE OF 17-138</scope>
    <source>
        <strain>Northern Balkan</strain>
        <tissue>Venom</tissue>
    </source>
</reference>
<reference key="3">
    <citation type="journal article" date="2011" name="Toxicon">
        <title>Ammodytoxin: a window into understanding presynaptic toxicity of secreted phospholipases A(2) and more.</title>
        <authorList>
            <person name="Krizaj I."/>
        </authorList>
    </citation>
    <scope>REVIEW</scope>
    <scope>TOXIC DOSE</scope>
</reference>
<reference key="4">
    <citation type="journal article" date="2005" name="Biochemistry">
        <title>Ammodytoxins, potent presynaptic neurotoxins, are also highly efficient phospholipase A2 enzymes.</title>
        <authorList>
            <person name="Petan T."/>
            <person name="Krizaj I."/>
            <person name="Gelb M.H."/>
            <person name="Pungercar J."/>
        </authorList>
    </citation>
    <scope>CATALYTIC ACTIVITY</scope>
    <scope>COFACTOR</scope>
    <scope>SITE</scope>
</reference>
<reference key="5">
    <citation type="journal article" date="2006" name="Biochimie">
        <title>The C-terminal and beta-wing regions of ammodytoxin A, a neurotoxic phospholipase A2 from Vipera ammodytes ammodytes, are critical for binding to factor Xa and for anticoagulant effect.</title>
        <authorList>
            <person name="Prijatelj P."/>
            <person name="Charnay M."/>
            <person name="Ivanovski G."/>
            <person name="Jenko Z."/>
            <person name="Pungercar J."/>
            <person name="Krizaj I."/>
            <person name="Faure G."/>
        </authorList>
    </citation>
    <scope>FUNCTION</scope>
    <scope>BINDING TO COAGULATION FACTOR X (F10)</scope>
</reference>
<keyword id="KW-1203">Blood coagulation cascade inhibiting toxin</keyword>
<keyword id="KW-0106">Calcium</keyword>
<keyword id="KW-0903">Direct protein sequencing</keyword>
<keyword id="KW-1015">Disulfide bond</keyword>
<keyword id="KW-1199">Hemostasis impairing toxin</keyword>
<keyword id="KW-1035">Host cytoplasm</keyword>
<keyword id="KW-0378">Hydrolase</keyword>
<keyword id="KW-0442">Lipid degradation</keyword>
<keyword id="KW-0443">Lipid metabolism</keyword>
<keyword id="KW-0479">Metal-binding</keyword>
<keyword id="KW-0528">Neurotoxin</keyword>
<keyword id="KW-0638">Presynaptic neurotoxin</keyword>
<keyword id="KW-0964">Secreted</keyword>
<keyword id="KW-0732">Signal</keyword>
<keyword id="KW-0800">Toxin</keyword>